<feature type="chain" id="PRO_0000148805" description="Aspartyl/glutamyl-tRNA(Asn/Gln) amidotransferase subunit B">
    <location>
        <begin position="1"/>
        <end position="490"/>
    </location>
</feature>
<protein>
    <recommendedName>
        <fullName>Aspartyl/glutamyl-tRNA(Asn/Gln) amidotransferase subunit B</fullName>
        <shortName>Asp/Glu-ADT subunit B</shortName>
        <ecNumber>6.3.5.-</ecNumber>
    </recommendedName>
</protein>
<accession>Q49092</accession>
<keyword id="KW-0067">ATP-binding</keyword>
<keyword id="KW-0436">Ligase</keyword>
<keyword id="KW-0547">Nucleotide-binding</keyword>
<keyword id="KW-0648">Protein biosynthesis</keyword>
<sequence>MTQQAPLIDGYEVVIGIEIHCQLNTDSKIFSNAPTVFGQEPNTQATIVDLGFPGVLPVLNAGVIERALKFGMGVNAKLGTYNTFDRKNYFYPDLPKGYQITQMANPIVGEGYIDILVNAGQKDEYTKRIGITRAHLEEDAGKSVHDAVPQMTGVDLNRAGTPLIEIVSEPDMRSVDEAVAYVKTIHELVTWLGISDAIMAEGSFRADINVSVHKPNTPFGTRCELKNLNSFRFIHRAIKSEIERQIDVIEDGGKVVQATRLYDPERDETRAMRTKEEANDYRYFPDPDLLPVIISDETLAKVRADMPELPSVRKERFVNEFGLTAYDANVLNGSRELSDYFLQVLDIIGKNNAKIAANWVMGELSGSLNKNELTIDQSPISAKRLAGLIVRILDDTISGKIAKEVFGHLWESDKSADEIITEKGLKQETDTGAIEAIIVDVLANNQAMVDEYKGGKEKAFNGLVGQVMKASRGKANPAQVNALLKQMIGA</sequence>
<dbReference type="EC" id="6.3.5.-"/>
<dbReference type="EMBL" id="U49269">
    <property type="protein sequence ID" value="AAA92127.2"/>
    <property type="molecule type" value="Genomic_DNA"/>
</dbReference>
<dbReference type="RefSeq" id="WP_003668060.1">
    <property type="nucleotide sequence ID" value="NZ_RCKB01000015.1"/>
</dbReference>
<dbReference type="SMR" id="Q49092"/>
<dbReference type="eggNOG" id="COG0064">
    <property type="taxonomic scope" value="Bacteria"/>
</dbReference>
<dbReference type="GO" id="GO:0050566">
    <property type="term" value="F:asparaginyl-tRNA synthase (glutamine-hydrolyzing) activity"/>
    <property type="evidence" value="ECO:0007669"/>
    <property type="project" value="RHEA"/>
</dbReference>
<dbReference type="GO" id="GO:0005524">
    <property type="term" value="F:ATP binding"/>
    <property type="evidence" value="ECO:0007669"/>
    <property type="project" value="UniProtKB-KW"/>
</dbReference>
<dbReference type="GO" id="GO:0050567">
    <property type="term" value="F:glutaminyl-tRNA synthase (glutamine-hydrolyzing) activity"/>
    <property type="evidence" value="ECO:0007669"/>
    <property type="project" value="UniProtKB-UniRule"/>
</dbReference>
<dbReference type="GO" id="GO:0070681">
    <property type="term" value="P:glutaminyl-tRNAGln biosynthesis via transamidation"/>
    <property type="evidence" value="ECO:0007669"/>
    <property type="project" value="TreeGrafter"/>
</dbReference>
<dbReference type="GO" id="GO:0006412">
    <property type="term" value="P:translation"/>
    <property type="evidence" value="ECO:0007669"/>
    <property type="project" value="UniProtKB-UniRule"/>
</dbReference>
<dbReference type="FunFam" id="1.10.10.410:FF:000001">
    <property type="entry name" value="Aspartyl/glutamyl-tRNA(Asn/Gln) amidotransferase subunit B"/>
    <property type="match status" value="1"/>
</dbReference>
<dbReference type="Gene3D" id="1.10.10.410">
    <property type="match status" value="1"/>
</dbReference>
<dbReference type="Gene3D" id="1.10.150.380">
    <property type="entry name" value="GatB domain, N-terminal subdomain"/>
    <property type="match status" value="1"/>
</dbReference>
<dbReference type="HAMAP" id="MF_00121">
    <property type="entry name" value="GatB"/>
    <property type="match status" value="1"/>
</dbReference>
<dbReference type="InterPro" id="IPR017959">
    <property type="entry name" value="Asn/Gln-tRNA_amidoTrfase_suB/E"/>
</dbReference>
<dbReference type="InterPro" id="IPR006075">
    <property type="entry name" value="Asn/Gln-tRNA_Trfase_suB/E_cat"/>
</dbReference>
<dbReference type="InterPro" id="IPR018027">
    <property type="entry name" value="Asn/Gln_amidotransferase"/>
</dbReference>
<dbReference type="InterPro" id="IPR003789">
    <property type="entry name" value="Asn/Gln_tRNA_amidoTrase-B-like"/>
</dbReference>
<dbReference type="InterPro" id="IPR004413">
    <property type="entry name" value="GatB"/>
</dbReference>
<dbReference type="InterPro" id="IPR042114">
    <property type="entry name" value="GatB_C_1"/>
</dbReference>
<dbReference type="InterPro" id="IPR023168">
    <property type="entry name" value="GatB_Yqey_C_2"/>
</dbReference>
<dbReference type="InterPro" id="IPR017958">
    <property type="entry name" value="Gln-tRNA_amidoTrfase_suB_CS"/>
</dbReference>
<dbReference type="InterPro" id="IPR014746">
    <property type="entry name" value="Gln_synth/guanido_kin_cat_dom"/>
</dbReference>
<dbReference type="NCBIfam" id="TIGR00133">
    <property type="entry name" value="gatB"/>
    <property type="match status" value="1"/>
</dbReference>
<dbReference type="NCBIfam" id="NF004012">
    <property type="entry name" value="PRK05477.1-2"/>
    <property type="match status" value="1"/>
</dbReference>
<dbReference type="NCBIfam" id="NF004014">
    <property type="entry name" value="PRK05477.1-4"/>
    <property type="match status" value="1"/>
</dbReference>
<dbReference type="NCBIfam" id="NF004015">
    <property type="entry name" value="PRK05477.1-5"/>
    <property type="match status" value="1"/>
</dbReference>
<dbReference type="PANTHER" id="PTHR11659">
    <property type="entry name" value="GLUTAMYL-TRNA GLN AMIDOTRANSFERASE SUBUNIT B MITOCHONDRIAL AND PROKARYOTIC PET112-RELATED"/>
    <property type="match status" value="1"/>
</dbReference>
<dbReference type="PANTHER" id="PTHR11659:SF0">
    <property type="entry name" value="GLUTAMYL-TRNA(GLN) AMIDOTRANSFERASE SUBUNIT B, MITOCHONDRIAL"/>
    <property type="match status" value="1"/>
</dbReference>
<dbReference type="Pfam" id="PF02934">
    <property type="entry name" value="GatB_N"/>
    <property type="match status" value="1"/>
</dbReference>
<dbReference type="Pfam" id="PF02637">
    <property type="entry name" value="GatB_Yqey"/>
    <property type="match status" value="1"/>
</dbReference>
<dbReference type="SMART" id="SM00845">
    <property type="entry name" value="GatB_Yqey"/>
    <property type="match status" value="1"/>
</dbReference>
<dbReference type="SUPFAM" id="SSF89095">
    <property type="entry name" value="GatB/YqeY motif"/>
    <property type="match status" value="1"/>
</dbReference>
<dbReference type="SUPFAM" id="SSF55931">
    <property type="entry name" value="Glutamine synthetase/guanido kinase"/>
    <property type="match status" value="1"/>
</dbReference>
<dbReference type="PROSITE" id="PS01234">
    <property type="entry name" value="GATB"/>
    <property type="match status" value="1"/>
</dbReference>
<proteinExistence type="inferred from homology"/>
<name>GATB_MORCA</name>
<reference key="1">
    <citation type="submission" date="2001-09" db="EMBL/GenBank/DDBJ databases">
        <title>The Moraxella (Branhamella) catarrhalis chromosomal beta-lactamase gene is flanked by an amidase gene and a conserved gene of unknown function.</title>
        <authorList>
            <person name="Beaulieu D."/>
            <person name="Piche L."/>
            <person name="Parr T.R. Jr."/>
            <person name="Roeger-Lawry K."/>
            <person name="Rosteck P."/>
            <person name="Roy P.H."/>
        </authorList>
    </citation>
    <scope>NUCLEOTIDE SEQUENCE [GENOMIC DNA]</scope>
    <source>
        <strain>ATCC 53879 / E22</strain>
    </source>
</reference>
<organism>
    <name type="scientific">Moraxella catarrhalis</name>
    <name type="common">Branhamella catarrhalis</name>
    <dbReference type="NCBI Taxonomy" id="480"/>
    <lineage>
        <taxon>Bacteria</taxon>
        <taxon>Pseudomonadati</taxon>
        <taxon>Pseudomonadota</taxon>
        <taxon>Gammaproteobacteria</taxon>
        <taxon>Moraxellales</taxon>
        <taxon>Moraxellaceae</taxon>
        <taxon>Moraxella</taxon>
    </lineage>
</organism>
<comment type="function">
    <text evidence="1">Allows the formation of correctly charged Asn-tRNA(Asn) or Gln-tRNA(Gln) through the transamidation of misacylated Asp-tRNA(Asn) or Glu-tRNA(Gln) in organisms which lack either or both of asparaginyl-tRNA or glutaminyl-tRNA synthetases. The reaction takes place in the presence of glutamine and ATP through an activated phospho-Asp-tRNA(Asn) or phospho-Glu-tRNA(Gln) (By similarity).</text>
</comment>
<comment type="catalytic activity">
    <reaction>
        <text>L-glutamyl-tRNA(Gln) + L-glutamine + ATP + H2O = L-glutaminyl-tRNA(Gln) + L-glutamate + ADP + phosphate + H(+)</text>
        <dbReference type="Rhea" id="RHEA:17521"/>
        <dbReference type="Rhea" id="RHEA-COMP:9681"/>
        <dbReference type="Rhea" id="RHEA-COMP:9684"/>
        <dbReference type="ChEBI" id="CHEBI:15377"/>
        <dbReference type="ChEBI" id="CHEBI:15378"/>
        <dbReference type="ChEBI" id="CHEBI:29985"/>
        <dbReference type="ChEBI" id="CHEBI:30616"/>
        <dbReference type="ChEBI" id="CHEBI:43474"/>
        <dbReference type="ChEBI" id="CHEBI:58359"/>
        <dbReference type="ChEBI" id="CHEBI:78520"/>
        <dbReference type="ChEBI" id="CHEBI:78521"/>
        <dbReference type="ChEBI" id="CHEBI:456216"/>
    </reaction>
</comment>
<comment type="catalytic activity">
    <reaction>
        <text>L-aspartyl-tRNA(Asn) + L-glutamine + ATP + H2O = L-asparaginyl-tRNA(Asn) + L-glutamate + ADP + phosphate + 2 H(+)</text>
        <dbReference type="Rhea" id="RHEA:14513"/>
        <dbReference type="Rhea" id="RHEA-COMP:9674"/>
        <dbReference type="Rhea" id="RHEA-COMP:9677"/>
        <dbReference type="ChEBI" id="CHEBI:15377"/>
        <dbReference type="ChEBI" id="CHEBI:15378"/>
        <dbReference type="ChEBI" id="CHEBI:29985"/>
        <dbReference type="ChEBI" id="CHEBI:30616"/>
        <dbReference type="ChEBI" id="CHEBI:43474"/>
        <dbReference type="ChEBI" id="CHEBI:58359"/>
        <dbReference type="ChEBI" id="CHEBI:78515"/>
        <dbReference type="ChEBI" id="CHEBI:78516"/>
        <dbReference type="ChEBI" id="CHEBI:456216"/>
    </reaction>
</comment>
<comment type="subunit">
    <text evidence="1">Heterotrimer of A, B and C subunits.</text>
</comment>
<comment type="similarity">
    <text evidence="2">Belongs to the GatB/GatE family. GatB subfamily.</text>
</comment>
<gene>
    <name type="primary">gatB</name>
</gene>
<evidence type="ECO:0000250" key="1"/>
<evidence type="ECO:0000305" key="2"/>